<gene>
    <name type="ORF">ORF122</name>
</gene>
<protein>
    <recommendedName>
        <fullName>Uncharacterized protein ORF122</fullName>
    </recommendedName>
</protein>
<keyword id="KW-1185">Reference proteome</keyword>
<dbReference type="EMBL" id="AJ854042">
    <property type="protein sequence ID" value="CAH69390.1"/>
    <property type="molecule type" value="Genomic_DNA"/>
</dbReference>
<dbReference type="RefSeq" id="YP_001496928.1">
    <property type="nucleotide sequence ID" value="NC_009884.1"/>
</dbReference>
<dbReference type="KEGG" id="vg:5656061"/>
<dbReference type="Proteomes" id="UP000006364">
    <property type="component" value="Genome"/>
</dbReference>
<reference key="1">
    <citation type="journal article" date="2005" name="J. Bacteriol.">
        <title>Structure and genome organization of AFV2, a novel archaeal lipothrixvirus with unusual terminal and core structures.</title>
        <authorList>
            <person name="Haring M."/>
            <person name="Vestergaard G."/>
            <person name="Brugger K."/>
            <person name="Rachel R."/>
            <person name="Garrett R.A."/>
            <person name="Prangishvili D."/>
        </authorList>
    </citation>
    <scope>NUCLEOTIDE SEQUENCE [GENOMIC DNA]</scope>
</reference>
<name>Y122_AFV2P</name>
<organismHost>
    <name type="scientific">Acidianus sp. F28</name>
    <dbReference type="NCBI Taxonomy" id="315458"/>
</organismHost>
<feature type="chain" id="PRO_0000384508" description="Uncharacterized protein ORF122">
    <location>
        <begin position="1"/>
        <end position="122"/>
    </location>
</feature>
<organism>
    <name type="scientific">Acidianus filamentous virus 2 (isolate Italy/Pozzuoli)</name>
    <name type="common">AFV-2</name>
    <dbReference type="NCBI Taxonomy" id="654910"/>
    <lineage>
        <taxon>Viruses</taxon>
        <taxon>Adnaviria</taxon>
        <taxon>Zilligvirae</taxon>
        <taxon>Taleaviricota</taxon>
        <taxon>Tokiviricetes</taxon>
        <taxon>Ligamenvirales</taxon>
        <taxon>Lipothrixviridae</taxon>
        <taxon>Deltalipothrixvirus</taxon>
        <taxon>Acidianus filamentous virus 2</taxon>
    </lineage>
</organism>
<accession>Q573G6</accession>
<sequence>MQVLQIVKEKAKMRQNMNFFETTIYEKYDLRDKIKPGQKFVVRQGDLIIVNYDIENPQKRGLRFARIIADRENGSVIEYFRNSHVILSGEGFTSIFHPEHGLVILPVTRDDLTFYTIDNSKD</sequence>
<proteinExistence type="predicted"/>